<proteinExistence type="inferred from homology"/>
<keyword id="KW-0474">Menaquinone biosynthesis</keyword>
<keyword id="KW-0489">Methyltransferase</keyword>
<keyword id="KW-1185">Reference proteome</keyword>
<keyword id="KW-0949">S-adenosyl-L-methionine</keyword>
<keyword id="KW-0808">Transferase</keyword>
<keyword id="KW-0831">Ubiquinone biosynthesis</keyword>
<dbReference type="EC" id="2.1.1.163" evidence="1"/>
<dbReference type="EC" id="2.1.1.201" evidence="1"/>
<dbReference type="EMBL" id="CU468135">
    <property type="protein sequence ID" value="CAO95281.1"/>
    <property type="molecule type" value="Genomic_DNA"/>
</dbReference>
<dbReference type="RefSeq" id="WP_012440001.1">
    <property type="nucleotide sequence ID" value="NC_010694.1"/>
</dbReference>
<dbReference type="SMR" id="B2VG41"/>
<dbReference type="STRING" id="465817.ETA_02350"/>
<dbReference type="KEGG" id="eta:ETA_02350"/>
<dbReference type="eggNOG" id="COG2226">
    <property type="taxonomic scope" value="Bacteria"/>
</dbReference>
<dbReference type="HOGENOM" id="CLU_037990_0_0_6"/>
<dbReference type="OrthoDB" id="9808140at2"/>
<dbReference type="UniPathway" id="UPA00079">
    <property type="reaction ID" value="UER00169"/>
</dbReference>
<dbReference type="UniPathway" id="UPA00232"/>
<dbReference type="Proteomes" id="UP000001726">
    <property type="component" value="Chromosome"/>
</dbReference>
<dbReference type="GO" id="GO:0008425">
    <property type="term" value="F:2-methoxy-6-polyprenyl-1,4-benzoquinol methyltransferase activity"/>
    <property type="evidence" value="ECO:0007669"/>
    <property type="project" value="UniProtKB-UniRule"/>
</dbReference>
<dbReference type="GO" id="GO:0043770">
    <property type="term" value="F:demethylmenaquinone methyltransferase activity"/>
    <property type="evidence" value="ECO:0007669"/>
    <property type="project" value="UniProtKB-UniRule"/>
</dbReference>
<dbReference type="GO" id="GO:0009060">
    <property type="term" value="P:aerobic respiration"/>
    <property type="evidence" value="ECO:0007669"/>
    <property type="project" value="UniProtKB-UniRule"/>
</dbReference>
<dbReference type="GO" id="GO:0009234">
    <property type="term" value="P:menaquinone biosynthetic process"/>
    <property type="evidence" value="ECO:0007669"/>
    <property type="project" value="UniProtKB-UniRule"/>
</dbReference>
<dbReference type="GO" id="GO:0032259">
    <property type="term" value="P:methylation"/>
    <property type="evidence" value="ECO:0007669"/>
    <property type="project" value="UniProtKB-KW"/>
</dbReference>
<dbReference type="CDD" id="cd02440">
    <property type="entry name" value="AdoMet_MTases"/>
    <property type="match status" value="1"/>
</dbReference>
<dbReference type="FunFam" id="3.40.50.150:FF:000014">
    <property type="entry name" value="Ubiquinone/menaquinone biosynthesis C-methyltransferase UbiE"/>
    <property type="match status" value="1"/>
</dbReference>
<dbReference type="Gene3D" id="3.40.50.150">
    <property type="entry name" value="Vaccinia Virus protein VP39"/>
    <property type="match status" value="1"/>
</dbReference>
<dbReference type="HAMAP" id="MF_01813">
    <property type="entry name" value="MenG_UbiE_methyltr"/>
    <property type="match status" value="1"/>
</dbReference>
<dbReference type="InterPro" id="IPR029063">
    <property type="entry name" value="SAM-dependent_MTases_sf"/>
</dbReference>
<dbReference type="InterPro" id="IPR004033">
    <property type="entry name" value="UbiE/COQ5_MeTrFase"/>
</dbReference>
<dbReference type="InterPro" id="IPR023576">
    <property type="entry name" value="UbiE/COQ5_MeTrFase_CS"/>
</dbReference>
<dbReference type="NCBIfam" id="TIGR01934">
    <property type="entry name" value="MenG_MenH_UbiE"/>
    <property type="match status" value="1"/>
</dbReference>
<dbReference type="NCBIfam" id="NF001240">
    <property type="entry name" value="PRK00216.1-1"/>
    <property type="match status" value="1"/>
</dbReference>
<dbReference type="NCBIfam" id="NF001242">
    <property type="entry name" value="PRK00216.1-3"/>
    <property type="match status" value="1"/>
</dbReference>
<dbReference type="NCBIfam" id="NF001244">
    <property type="entry name" value="PRK00216.1-5"/>
    <property type="match status" value="1"/>
</dbReference>
<dbReference type="PANTHER" id="PTHR43591:SF24">
    <property type="entry name" value="2-METHOXY-6-POLYPRENYL-1,4-BENZOQUINOL METHYLASE, MITOCHONDRIAL"/>
    <property type="match status" value="1"/>
</dbReference>
<dbReference type="PANTHER" id="PTHR43591">
    <property type="entry name" value="METHYLTRANSFERASE"/>
    <property type="match status" value="1"/>
</dbReference>
<dbReference type="Pfam" id="PF01209">
    <property type="entry name" value="Ubie_methyltran"/>
    <property type="match status" value="1"/>
</dbReference>
<dbReference type="SUPFAM" id="SSF53335">
    <property type="entry name" value="S-adenosyl-L-methionine-dependent methyltransferases"/>
    <property type="match status" value="1"/>
</dbReference>
<dbReference type="PROSITE" id="PS51608">
    <property type="entry name" value="SAM_MT_UBIE"/>
    <property type="match status" value="1"/>
</dbReference>
<dbReference type="PROSITE" id="PS01183">
    <property type="entry name" value="UBIE_1"/>
    <property type="match status" value="1"/>
</dbReference>
<dbReference type="PROSITE" id="PS01184">
    <property type="entry name" value="UBIE_2"/>
    <property type="match status" value="1"/>
</dbReference>
<comment type="function">
    <text evidence="1">Methyltransferase required for the conversion of demethylmenaquinol (DMKH2) to menaquinol (MKH2) and the conversion of 2-polyprenyl-6-methoxy-1,4-benzoquinol (DDMQH2) to 2-polyprenyl-3-methyl-6-methoxy-1,4-benzoquinol (DMQH2).</text>
</comment>
<comment type="catalytic activity">
    <reaction evidence="1">
        <text>a 2-demethylmenaquinol + S-adenosyl-L-methionine = a menaquinol + S-adenosyl-L-homocysteine + H(+)</text>
        <dbReference type="Rhea" id="RHEA:42640"/>
        <dbReference type="Rhea" id="RHEA-COMP:9539"/>
        <dbReference type="Rhea" id="RHEA-COMP:9563"/>
        <dbReference type="ChEBI" id="CHEBI:15378"/>
        <dbReference type="ChEBI" id="CHEBI:18151"/>
        <dbReference type="ChEBI" id="CHEBI:55437"/>
        <dbReference type="ChEBI" id="CHEBI:57856"/>
        <dbReference type="ChEBI" id="CHEBI:59789"/>
        <dbReference type="EC" id="2.1.1.163"/>
    </reaction>
</comment>
<comment type="catalytic activity">
    <reaction evidence="1">
        <text>a 2-methoxy-6-(all-trans-polyprenyl)benzene-1,4-diol + S-adenosyl-L-methionine = a 5-methoxy-2-methyl-3-(all-trans-polyprenyl)benzene-1,4-diol + S-adenosyl-L-homocysteine + H(+)</text>
        <dbReference type="Rhea" id="RHEA:28286"/>
        <dbReference type="Rhea" id="RHEA-COMP:10858"/>
        <dbReference type="Rhea" id="RHEA-COMP:10859"/>
        <dbReference type="ChEBI" id="CHEBI:15378"/>
        <dbReference type="ChEBI" id="CHEBI:57856"/>
        <dbReference type="ChEBI" id="CHEBI:59789"/>
        <dbReference type="ChEBI" id="CHEBI:84166"/>
        <dbReference type="ChEBI" id="CHEBI:84167"/>
        <dbReference type="EC" id="2.1.1.201"/>
    </reaction>
</comment>
<comment type="pathway">
    <text evidence="1">Quinol/quinone metabolism; menaquinone biosynthesis; menaquinol from 1,4-dihydroxy-2-naphthoate: step 2/2.</text>
</comment>
<comment type="pathway">
    <text evidence="1">Cofactor biosynthesis; ubiquinone biosynthesis.</text>
</comment>
<comment type="similarity">
    <text evidence="1">Belongs to the class I-like SAM-binding methyltransferase superfamily. MenG/UbiE family.</text>
</comment>
<sequence length="251" mass="28042">MADESKDTTHFGYRTVAKDEKADMVADVFHSVAAKYDLMNDLMSFGIHRVWKRFTIDCSGVRRGQRVLDLAGGTGDLTAKFSRLVGETGEVVLADINSSMLKVGREKLRNKGIIGNVNYVQANAEALPFPDNYFDCITIAFGLRNVTEKENALASMFRVLKPGGRLLVLEFSKPQFEPLSKAYDAYSFHILPRIGEVVAKDAGSYRYLAESIRMHPDQETLKQMMADVGFENTTYHNLTGGIVALHRGFKF</sequence>
<reference key="1">
    <citation type="journal article" date="2008" name="Environ. Microbiol.">
        <title>The genome of Erwinia tasmaniensis strain Et1/99, a non-pathogenic bacterium in the genus Erwinia.</title>
        <authorList>
            <person name="Kube M."/>
            <person name="Migdoll A.M."/>
            <person name="Mueller I."/>
            <person name="Kuhl H."/>
            <person name="Beck A."/>
            <person name="Reinhardt R."/>
            <person name="Geider K."/>
        </authorList>
    </citation>
    <scope>NUCLEOTIDE SEQUENCE [LARGE SCALE GENOMIC DNA]</scope>
    <source>
        <strain>DSM 17950 / CFBP 7177 / CIP 109463 / NCPPB 4357 / Et1/99</strain>
    </source>
</reference>
<protein>
    <recommendedName>
        <fullName evidence="1">Ubiquinone/menaquinone biosynthesis C-methyltransferase UbiE</fullName>
        <ecNumber evidence="1">2.1.1.163</ecNumber>
        <ecNumber evidence="1">2.1.1.201</ecNumber>
    </recommendedName>
    <alternativeName>
        <fullName evidence="1">2-methoxy-6-polyprenyl-1,4-benzoquinol methylase</fullName>
    </alternativeName>
    <alternativeName>
        <fullName evidence="1">Demethylmenaquinone methyltransferase</fullName>
    </alternativeName>
</protein>
<feature type="chain" id="PRO_1000187765" description="Ubiquinone/menaquinone biosynthesis C-methyltransferase UbiE">
    <location>
        <begin position="1"/>
        <end position="251"/>
    </location>
</feature>
<feature type="binding site" evidence="1">
    <location>
        <position position="74"/>
    </location>
    <ligand>
        <name>S-adenosyl-L-methionine</name>
        <dbReference type="ChEBI" id="CHEBI:59789"/>
    </ligand>
</feature>
<feature type="binding site" evidence="1">
    <location>
        <position position="95"/>
    </location>
    <ligand>
        <name>S-adenosyl-L-methionine</name>
        <dbReference type="ChEBI" id="CHEBI:59789"/>
    </ligand>
</feature>
<feature type="binding site" evidence="1">
    <location>
        <begin position="123"/>
        <end position="124"/>
    </location>
    <ligand>
        <name>S-adenosyl-L-methionine</name>
        <dbReference type="ChEBI" id="CHEBI:59789"/>
    </ligand>
</feature>
<name>UBIE_ERWT9</name>
<accession>B2VG41</accession>
<organism>
    <name type="scientific">Erwinia tasmaniensis (strain DSM 17950 / CFBP 7177 / CIP 109463 / NCPPB 4357 / Et1/99)</name>
    <dbReference type="NCBI Taxonomy" id="465817"/>
    <lineage>
        <taxon>Bacteria</taxon>
        <taxon>Pseudomonadati</taxon>
        <taxon>Pseudomonadota</taxon>
        <taxon>Gammaproteobacteria</taxon>
        <taxon>Enterobacterales</taxon>
        <taxon>Erwiniaceae</taxon>
        <taxon>Erwinia</taxon>
    </lineage>
</organism>
<gene>
    <name evidence="1" type="primary">ubiE</name>
    <name type="ordered locus">ETA_02350</name>
</gene>
<evidence type="ECO:0000255" key="1">
    <source>
        <dbReference type="HAMAP-Rule" id="MF_01813"/>
    </source>
</evidence>